<sequence length="211" mass="23205">MFITFEGIDGCGKTTQAVLLAKYLSDLYGEHRVVLTREPGGTSLNELIRGALLGLTDYKLDGITELMLFIAMRRESFVKVVLPGLLAGKIVISDRFTDSTVAYQGYGCGVDLALVGMLNSLVADVVPDITFVIDASIELALARTSLNGFENHGPEFYDRVREGFRTIVANNPHRCHMIDCKSDAAEDVYSTHDRIVALFRAITKDKLKVAK</sequence>
<protein>
    <recommendedName>
        <fullName evidence="1">Thymidylate kinase</fullName>
        <ecNumber evidence="1">2.7.4.9</ecNumber>
    </recommendedName>
    <alternativeName>
        <fullName evidence="1">dTMP kinase</fullName>
    </alternativeName>
</protein>
<dbReference type="EC" id="2.7.4.9" evidence="1"/>
<dbReference type="EMBL" id="CP001079">
    <property type="protein sequence ID" value="ACM48968.1"/>
    <property type="molecule type" value="Genomic_DNA"/>
</dbReference>
<dbReference type="RefSeq" id="WP_010267004.1">
    <property type="nucleotide sequence ID" value="NZ_AFMS01000159.1"/>
</dbReference>
<dbReference type="SMR" id="B9KHK6"/>
<dbReference type="STRING" id="320483.AMF_078"/>
<dbReference type="GeneID" id="7398796"/>
<dbReference type="KEGG" id="amf:AMF_078"/>
<dbReference type="PATRIC" id="fig|320483.3.peg.94"/>
<dbReference type="eggNOG" id="COG0125">
    <property type="taxonomic scope" value="Bacteria"/>
</dbReference>
<dbReference type="HOGENOM" id="CLU_049131_0_0_5"/>
<dbReference type="Proteomes" id="UP000007307">
    <property type="component" value="Chromosome"/>
</dbReference>
<dbReference type="GO" id="GO:0005829">
    <property type="term" value="C:cytosol"/>
    <property type="evidence" value="ECO:0007669"/>
    <property type="project" value="TreeGrafter"/>
</dbReference>
<dbReference type="GO" id="GO:0005524">
    <property type="term" value="F:ATP binding"/>
    <property type="evidence" value="ECO:0007669"/>
    <property type="project" value="UniProtKB-UniRule"/>
</dbReference>
<dbReference type="GO" id="GO:0004798">
    <property type="term" value="F:dTMP kinase activity"/>
    <property type="evidence" value="ECO:0007669"/>
    <property type="project" value="UniProtKB-UniRule"/>
</dbReference>
<dbReference type="GO" id="GO:0006233">
    <property type="term" value="P:dTDP biosynthetic process"/>
    <property type="evidence" value="ECO:0007669"/>
    <property type="project" value="InterPro"/>
</dbReference>
<dbReference type="GO" id="GO:0006235">
    <property type="term" value="P:dTTP biosynthetic process"/>
    <property type="evidence" value="ECO:0007669"/>
    <property type="project" value="UniProtKB-UniRule"/>
</dbReference>
<dbReference type="GO" id="GO:0006227">
    <property type="term" value="P:dUDP biosynthetic process"/>
    <property type="evidence" value="ECO:0007669"/>
    <property type="project" value="TreeGrafter"/>
</dbReference>
<dbReference type="CDD" id="cd01672">
    <property type="entry name" value="TMPK"/>
    <property type="match status" value="1"/>
</dbReference>
<dbReference type="FunFam" id="3.40.50.300:FF:000225">
    <property type="entry name" value="Thymidylate kinase"/>
    <property type="match status" value="1"/>
</dbReference>
<dbReference type="Gene3D" id="3.40.50.300">
    <property type="entry name" value="P-loop containing nucleotide triphosphate hydrolases"/>
    <property type="match status" value="1"/>
</dbReference>
<dbReference type="HAMAP" id="MF_00165">
    <property type="entry name" value="Thymidylate_kinase"/>
    <property type="match status" value="1"/>
</dbReference>
<dbReference type="InterPro" id="IPR027417">
    <property type="entry name" value="P-loop_NTPase"/>
</dbReference>
<dbReference type="InterPro" id="IPR039430">
    <property type="entry name" value="Thymidylate_kin-like_dom"/>
</dbReference>
<dbReference type="InterPro" id="IPR018095">
    <property type="entry name" value="Thymidylate_kin_CS"/>
</dbReference>
<dbReference type="InterPro" id="IPR018094">
    <property type="entry name" value="Thymidylate_kinase"/>
</dbReference>
<dbReference type="NCBIfam" id="TIGR00041">
    <property type="entry name" value="DTMP_kinase"/>
    <property type="match status" value="1"/>
</dbReference>
<dbReference type="PANTHER" id="PTHR10344">
    <property type="entry name" value="THYMIDYLATE KINASE"/>
    <property type="match status" value="1"/>
</dbReference>
<dbReference type="PANTHER" id="PTHR10344:SF4">
    <property type="entry name" value="UMP-CMP KINASE 2, MITOCHONDRIAL"/>
    <property type="match status" value="1"/>
</dbReference>
<dbReference type="Pfam" id="PF02223">
    <property type="entry name" value="Thymidylate_kin"/>
    <property type="match status" value="1"/>
</dbReference>
<dbReference type="SUPFAM" id="SSF52540">
    <property type="entry name" value="P-loop containing nucleoside triphosphate hydrolases"/>
    <property type="match status" value="1"/>
</dbReference>
<dbReference type="PROSITE" id="PS01331">
    <property type="entry name" value="THYMIDYLATE_KINASE"/>
    <property type="match status" value="1"/>
</dbReference>
<accession>B9KHK6</accession>
<name>KTHY_ANAMF</name>
<reference key="1">
    <citation type="journal article" date="2009" name="BMC Genomics">
        <title>Conservation in the face of diversity: multistrain analysis of an intracellular bacterium.</title>
        <authorList>
            <person name="Dark M.J."/>
            <person name="Herndon D.R."/>
            <person name="Kappmeyer L.S."/>
            <person name="Gonzales M.P."/>
            <person name="Nordeen E."/>
            <person name="Palmer G.H."/>
            <person name="Knowles D.P. Jr."/>
            <person name="Brayton K.A."/>
        </authorList>
    </citation>
    <scope>NUCLEOTIDE SEQUENCE [LARGE SCALE GENOMIC DNA]</scope>
    <source>
        <strain>Florida</strain>
    </source>
</reference>
<evidence type="ECO:0000255" key="1">
    <source>
        <dbReference type="HAMAP-Rule" id="MF_00165"/>
    </source>
</evidence>
<keyword id="KW-0067">ATP-binding</keyword>
<keyword id="KW-0418">Kinase</keyword>
<keyword id="KW-0545">Nucleotide biosynthesis</keyword>
<keyword id="KW-0547">Nucleotide-binding</keyword>
<keyword id="KW-1185">Reference proteome</keyword>
<keyword id="KW-0808">Transferase</keyword>
<proteinExistence type="inferred from homology"/>
<comment type="function">
    <text evidence="1">Phosphorylation of dTMP to form dTDP in both de novo and salvage pathways of dTTP synthesis.</text>
</comment>
<comment type="catalytic activity">
    <reaction evidence="1">
        <text>dTMP + ATP = dTDP + ADP</text>
        <dbReference type="Rhea" id="RHEA:13517"/>
        <dbReference type="ChEBI" id="CHEBI:30616"/>
        <dbReference type="ChEBI" id="CHEBI:58369"/>
        <dbReference type="ChEBI" id="CHEBI:63528"/>
        <dbReference type="ChEBI" id="CHEBI:456216"/>
        <dbReference type="EC" id="2.7.4.9"/>
    </reaction>
</comment>
<comment type="similarity">
    <text evidence="1">Belongs to the thymidylate kinase family.</text>
</comment>
<feature type="chain" id="PRO_1000123553" description="Thymidylate kinase">
    <location>
        <begin position="1"/>
        <end position="211"/>
    </location>
</feature>
<feature type="binding site" evidence="1">
    <location>
        <begin position="7"/>
        <end position="14"/>
    </location>
    <ligand>
        <name>ATP</name>
        <dbReference type="ChEBI" id="CHEBI:30616"/>
    </ligand>
</feature>
<organism>
    <name type="scientific">Anaplasma marginale (strain Florida)</name>
    <dbReference type="NCBI Taxonomy" id="320483"/>
    <lineage>
        <taxon>Bacteria</taxon>
        <taxon>Pseudomonadati</taxon>
        <taxon>Pseudomonadota</taxon>
        <taxon>Alphaproteobacteria</taxon>
        <taxon>Rickettsiales</taxon>
        <taxon>Anaplasmataceae</taxon>
        <taxon>Anaplasma</taxon>
    </lineage>
</organism>
<gene>
    <name evidence="1" type="primary">tmk</name>
    <name type="ordered locus">AMF_078</name>
</gene>